<name>RRP4_THEPD</name>
<sequence length="237" mass="26222">MRGGAVTIHVKDRQIVAPGEFVGEQGRFRVEGQVFRVGRKYYSKVLGVVTVDEENRVVKVIPLKGKYFPVEGHIVVGKVVDIGFTSWEVDINSPYVAVLPVSEVTSRPVTISRNELSRILDVGDLILAKIVSFDLSKDPVLTIKESRLGKIPRGTLVEIPPQKVPRVIGRRGSMVSMIEDLLGVKLIVGQNGRIVVVGDDPQRVEIAVLAVRKIEAEAHTTGLTDRIKQFIEERLRS</sequence>
<reference key="1">
    <citation type="journal article" date="2008" name="J. Bacteriol.">
        <title>Genome sequence of Thermofilum pendens reveals an exceptional loss of biosynthetic pathways without genome reduction.</title>
        <authorList>
            <person name="Anderson I."/>
            <person name="Rodriguez J."/>
            <person name="Susanti D."/>
            <person name="Porat I."/>
            <person name="Reich C."/>
            <person name="Ulrich L.E."/>
            <person name="Elkins J.G."/>
            <person name="Mavromatis K."/>
            <person name="Lykidis A."/>
            <person name="Kim E."/>
            <person name="Thompson L.S."/>
            <person name="Nolan M."/>
            <person name="Land M."/>
            <person name="Copeland A."/>
            <person name="Lapidus A."/>
            <person name="Lucas S."/>
            <person name="Detter C."/>
            <person name="Zhulin I.B."/>
            <person name="Olsen G.J."/>
            <person name="Whitman W."/>
            <person name="Mukhopadhyay B."/>
            <person name="Bristow J."/>
            <person name="Kyrpides N."/>
        </authorList>
    </citation>
    <scope>NUCLEOTIDE SEQUENCE [LARGE SCALE GENOMIC DNA]</scope>
    <source>
        <strain>DSM 2475 / Hrk 5</strain>
    </source>
</reference>
<keyword id="KW-0963">Cytoplasm</keyword>
<keyword id="KW-0271">Exosome</keyword>
<keyword id="KW-1185">Reference proteome</keyword>
<keyword id="KW-0694">RNA-binding</keyword>
<protein>
    <recommendedName>
        <fullName evidence="1">Exosome complex component Rrp4</fullName>
    </recommendedName>
</protein>
<comment type="function">
    <text evidence="1">Non-catalytic component of the exosome, which is a complex involved in RNA degradation. Increases the RNA binding and the efficiency of RNA degradation. Confers strong poly(A) specificity to the exosome.</text>
</comment>
<comment type="subunit">
    <text evidence="1">Component of the archaeal exosome complex. Forms a trimer of Rrp4 and/or Csl4 subunits. The trimer associates with a hexameric ring-like arrangement composed of 3 Rrp41-Rrp42 heterodimers.</text>
</comment>
<comment type="subcellular location">
    <subcellularLocation>
        <location evidence="1">Cytoplasm</location>
    </subcellularLocation>
</comment>
<comment type="similarity">
    <text evidence="1">Belongs to the RRP4 family.</text>
</comment>
<accession>A1RXQ7</accession>
<organism>
    <name type="scientific">Thermofilum pendens (strain DSM 2475 / Hrk 5)</name>
    <dbReference type="NCBI Taxonomy" id="368408"/>
    <lineage>
        <taxon>Archaea</taxon>
        <taxon>Thermoproteota</taxon>
        <taxon>Thermoprotei</taxon>
        <taxon>Thermofilales</taxon>
        <taxon>Thermofilaceae</taxon>
        <taxon>Thermofilum</taxon>
    </lineage>
</organism>
<feature type="chain" id="PRO_0000416236" description="Exosome complex component Rrp4">
    <location>
        <begin position="1"/>
        <end position="237"/>
    </location>
</feature>
<feature type="domain" description="S1 motif" evidence="1">
    <location>
        <begin position="72"/>
        <end position="144"/>
    </location>
</feature>
<feature type="domain" description="KH" evidence="1">
    <location>
        <begin position="152"/>
        <end position="211"/>
    </location>
</feature>
<proteinExistence type="inferred from homology"/>
<dbReference type="EMBL" id="CP000505">
    <property type="protein sequence ID" value="ABL77987.1"/>
    <property type="molecule type" value="Genomic_DNA"/>
</dbReference>
<dbReference type="SMR" id="A1RXQ7"/>
<dbReference type="STRING" id="368408.Tpen_0582"/>
<dbReference type="EnsemblBacteria" id="ABL77987">
    <property type="protein sequence ID" value="ABL77987"/>
    <property type="gene ID" value="Tpen_0582"/>
</dbReference>
<dbReference type="KEGG" id="tpe:Tpen_0582"/>
<dbReference type="eggNOG" id="arCOG00678">
    <property type="taxonomic scope" value="Archaea"/>
</dbReference>
<dbReference type="HOGENOM" id="CLU_071769_0_0_2"/>
<dbReference type="Proteomes" id="UP000000641">
    <property type="component" value="Chromosome"/>
</dbReference>
<dbReference type="GO" id="GO:0005737">
    <property type="term" value="C:cytoplasm"/>
    <property type="evidence" value="ECO:0007669"/>
    <property type="project" value="UniProtKB-SubCell"/>
</dbReference>
<dbReference type="GO" id="GO:0000178">
    <property type="term" value="C:exosome (RNase complex)"/>
    <property type="evidence" value="ECO:0007669"/>
    <property type="project" value="UniProtKB-KW"/>
</dbReference>
<dbReference type="GO" id="GO:0008143">
    <property type="term" value="F:poly(A) binding"/>
    <property type="evidence" value="ECO:0007669"/>
    <property type="project" value="InterPro"/>
</dbReference>
<dbReference type="GO" id="GO:0071034">
    <property type="term" value="P:CUT catabolic process"/>
    <property type="evidence" value="ECO:0007669"/>
    <property type="project" value="TreeGrafter"/>
</dbReference>
<dbReference type="GO" id="GO:0000467">
    <property type="term" value="P:exonucleolytic trimming to generate mature 3'-end of 5.8S rRNA from tricistronic rRNA transcript (SSU-rRNA, 5.8S rRNA, LSU-rRNA)"/>
    <property type="evidence" value="ECO:0007669"/>
    <property type="project" value="TreeGrafter"/>
</dbReference>
<dbReference type="GO" id="GO:0071051">
    <property type="term" value="P:poly(A)-dependent snoRNA 3'-end processing"/>
    <property type="evidence" value="ECO:0007669"/>
    <property type="project" value="TreeGrafter"/>
</dbReference>
<dbReference type="GO" id="GO:0006401">
    <property type="term" value="P:RNA catabolic process"/>
    <property type="evidence" value="ECO:0007669"/>
    <property type="project" value="UniProtKB-UniRule"/>
</dbReference>
<dbReference type="GO" id="GO:0034475">
    <property type="term" value="P:U4 snRNA 3'-end processing"/>
    <property type="evidence" value="ECO:0007669"/>
    <property type="project" value="TreeGrafter"/>
</dbReference>
<dbReference type="CDD" id="cd22524">
    <property type="entry name" value="KH-I_Rrp4_prokar"/>
    <property type="match status" value="1"/>
</dbReference>
<dbReference type="CDD" id="cd05789">
    <property type="entry name" value="S1_Rrp4"/>
    <property type="match status" value="1"/>
</dbReference>
<dbReference type="Gene3D" id="2.40.50.100">
    <property type="match status" value="1"/>
</dbReference>
<dbReference type="Gene3D" id="3.30.1370.10">
    <property type="entry name" value="K Homology domain, type 1"/>
    <property type="match status" value="1"/>
</dbReference>
<dbReference type="Gene3D" id="2.40.50.140">
    <property type="entry name" value="Nucleic acid-binding proteins"/>
    <property type="match status" value="1"/>
</dbReference>
<dbReference type="HAMAP" id="MF_00623">
    <property type="entry name" value="Exosome_Rrp4"/>
    <property type="match status" value="1"/>
</dbReference>
<dbReference type="InterPro" id="IPR026699">
    <property type="entry name" value="Exosome_RNA_bind1/RRP40/RRP4"/>
</dbReference>
<dbReference type="InterPro" id="IPR004087">
    <property type="entry name" value="KH_dom"/>
</dbReference>
<dbReference type="InterPro" id="IPR004088">
    <property type="entry name" value="KH_dom_type_1"/>
</dbReference>
<dbReference type="InterPro" id="IPR036612">
    <property type="entry name" value="KH_dom_type_1_sf"/>
</dbReference>
<dbReference type="InterPro" id="IPR012340">
    <property type="entry name" value="NA-bd_OB-fold"/>
</dbReference>
<dbReference type="InterPro" id="IPR023474">
    <property type="entry name" value="Rrp4"/>
</dbReference>
<dbReference type="InterPro" id="IPR054371">
    <property type="entry name" value="RRP4_N"/>
</dbReference>
<dbReference type="InterPro" id="IPR048565">
    <property type="entry name" value="RRP4_S1"/>
</dbReference>
<dbReference type="InterPro" id="IPR003029">
    <property type="entry name" value="S1_domain"/>
</dbReference>
<dbReference type="NCBIfam" id="NF003181">
    <property type="entry name" value="PRK04163.1-1"/>
    <property type="match status" value="1"/>
</dbReference>
<dbReference type="PANTHER" id="PTHR21321:SF4">
    <property type="entry name" value="EXOSOME COMPLEX COMPONENT RRP4"/>
    <property type="match status" value="1"/>
</dbReference>
<dbReference type="PANTHER" id="PTHR21321">
    <property type="entry name" value="PNAS-3 RELATED"/>
    <property type="match status" value="1"/>
</dbReference>
<dbReference type="Pfam" id="PF22625">
    <property type="entry name" value="ECR1_N_2"/>
    <property type="match status" value="1"/>
</dbReference>
<dbReference type="Pfam" id="PF00013">
    <property type="entry name" value="KH_1"/>
    <property type="match status" value="1"/>
</dbReference>
<dbReference type="Pfam" id="PF21266">
    <property type="entry name" value="RRP4_S1"/>
    <property type="match status" value="1"/>
</dbReference>
<dbReference type="SMART" id="SM00322">
    <property type="entry name" value="KH"/>
    <property type="match status" value="1"/>
</dbReference>
<dbReference type="SMART" id="SM00316">
    <property type="entry name" value="S1"/>
    <property type="match status" value="1"/>
</dbReference>
<dbReference type="SUPFAM" id="SSF54791">
    <property type="entry name" value="Eukaryotic type KH-domain (KH-domain type I)"/>
    <property type="match status" value="1"/>
</dbReference>
<dbReference type="SUPFAM" id="SSF50249">
    <property type="entry name" value="Nucleic acid-binding proteins"/>
    <property type="match status" value="1"/>
</dbReference>
<dbReference type="SUPFAM" id="SSF110324">
    <property type="entry name" value="Ribosomal L27 protein-like"/>
    <property type="match status" value="1"/>
</dbReference>
<dbReference type="PROSITE" id="PS50084">
    <property type="entry name" value="KH_TYPE_1"/>
    <property type="match status" value="1"/>
</dbReference>
<dbReference type="PROSITE" id="PS50126">
    <property type="entry name" value="S1"/>
    <property type="match status" value="1"/>
</dbReference>
<gene>
    <name evidence="1" type="primary">rrp4</name>
    <name type="ordered locus">Tpen_0582</name>
</gene>
<evidence type="ECO:0000255" key="1">
    <source>
        <dbReference type="HAMAP-Rule" id="MF_00623"/>
    </source>
</evidence>